<feature type="chain" id="PRO_1000009112" description="N-acetylmuramic acid 6-phosphate etherase">
    <location>
        <begin position="1"/>
        <end position="302"/>
    </location>
</feature>
<feature type="domain" description="SIS" evidence="1">
    <location>
        <begin position="58"/>
        <end position="221"/>
    </location>
</feature>
<feature type="active site" description="Proton donor" evidence="1">
    <location>
        <position position="86"/>
    </location>
</feature>
<feature type="active site" evidence="1">
    <location>
        <position position="117"/>
    </location>
</feature>
<keyword id="KW-0119">Carbohydrate metabolism</keyword>
<keyword id="KW-0456">Lyase</keyword>
<name>MURQ_CLOBL</name>
<gene>
    <name evidence="1" type="primary">murQ</name>
    <name type="ordered locus">CLI_1443</name>
</gene>
<dbReference type="EC" id="4.2.1.126" evidence="1"/>
<dbReference type="EMBL" id="CP000728">
    <property type="protein sequence ID" value="ABS42892.1"/>
    <property type="molecule type" value="Genomic_DNA"/>
</dbReference>
<dbReference type="RefSeq" id="WP_011988201.1">
    <property type="nucleotide sequence ID" value="NC_009699.1"/>
</dbReference>
<dbReference type="SMR" id="A7GD48"/>
<dbReference type="KEGG" id="cbf:CLI_1443"/>
<dbReference type="HOGENOM" id="CLU_049049_1_1_9"/>
<dbReference type="UniPathway" id="UPA00342"/>
<dbReference type="Proteomes" id="UP000002410">
    <property type="component" value="Chromosome"/>
</dbReference>
<dbReference type="GO" id="GO:0097367">
    <property type="term" value="F:carbohydrate derivative binding"/>
    <property type="evidence" value="ECO:0007669"/>
    <property type="project" value="InterPro"/>
</dbReference>
<dbReference type="GO" id="GO:0016835">
    <property type="term" value="F:carbon-oxygen lyase activity"/>
    <property type="evidence" value="ECO:0007669"/>
    <property type="project" value="UniProtKB-UniRule"/>
</dbReference>
<dbReference type="GO" id="GO:0016803">
    <property type="term" value="F:ether hydrolase activity"/>
    <property type="evidence" value="ECO:0007669"/>
    <property type="project" value="TreeGrafter"/>
</dbReference>
<dbReference type="GO" id="GO:0046348">
    <property type="term" value="P:amino sugar catabolic process"/>
    <property type="evidence" value="ECO:0007669"/>
    <property type="project" value="InterPro"/>
</dbReference>
<dbReference type="GO" id="GO:0097173">
    <property type="term" value="P:N-acetylmuramic acid catabolic process"/>
    <property type="evidence" value="ECO:0007669"/>
    <property type="project" value="UniProtKB-UniPathway"/>
</dbReference>
<dbReference type="GO" id="GO:0009254">
    <property type="term" value="P:peptidoglycan turnover"/>
    <property type="evidence" value="ECO:0007669"/>
    <property type="project" value="TreeGrafter"/>
</dbReference>
<dbReference type="CDD" id="cd05007">
    <property type="entry name" value="SIS_Etherase"/>
    <property type="match status" value="1"/>
</dbReference>
<dbReference type="FunFam" id="1.10.8.1080:FF:000001">
    <property type="entry name" value="N-acetylmuramic acid 6-phosphate etherase"/>
    <property type="match status" value="1"/>
</dbReference>
<dbReference type="FunFam" id="3.40.50.10490:FF:000014">
    <property type="entry name" value="N-acetylmuramic acid 6-phosphate etherase"/>
    <property type="match status" value="1"/>
</dbReference>
<dbReference type="Gene3D" id="1.10.8.1080">
    <property type="match status" value="1"/>
</dbReference>
<dbReference type="Gene3D" id="3.40.50.10490">
    <property type="entry name" value="Glucose-6-phosphate isomerase like protein, domain 1"/>
    <property type="match status" value="1"/>
</dbReference>
<dbReference type="HAMAP" id="MF_00068">
    <property type="entry name" value="MurQ"/>
    <property type="match status" value="1"/>
</dbReference>
<dbReference type="InterPro" id="IPR005488">
    <property type="entry name" value="Etherase_MurQ"/>
</dbReference>
<dbReference type="InterPro" id="IPR005486">
    <property type="entry name" value="Glucokinase_regulatory_CS"/>
</dbReference>
<dbReference type="InterPro" id="IPR040190">
    <property type="entry name" value="MURQ/GCKR"/>
</dbReference>
<dbReference type="InterPro" id="IPR001347">
    <property type="entry name" value="SIS_dom"/>
</dbReference>
<dbReference type="InterPro" id="IPR046348">
    <property type="entry name" value="SIS_dom_sf"/>
</dbReference>
<dbReference type="NCBIfam" id="TIGR00274">
    <property type="entry name" value="N-acetylmuramic acid 6-phosphate etherase"/>
    <property type="match status" value="1"/>
</dbReference>
<dbReference type="NCBIfam" id="NF003915">
    <property type="entry name" value="PRK05441.1"/>
    <property type="match status" value="1"/>
</dbReference>
<dbReference type="NCBIfam" id="NF009222">
    <property type="entry name" value="PRK12570.1"/>
    <property type="match status" value="1"/>
</dbReference>
<dbReference type="PANTHER" id="PTHR10088">
    <property type="entry name" value="GLUCOKINASE REGULATORY PROTEIN"/>
    <property type="match status" value="1"/>
</dbReference>
<dbReference type="PANTHER" id="PTHR10088:SF4">
    <property type="entry name" value="GLUCOKINASE REGULATORY PROTEIN"/>
    <property type="match status" value="1"/>
</dbReference>
<dbReference type="Pfam" id="PF22645">
    <property type="entry name" value="GKRP_SIS_N"/>
    <property type="match status" value="1"/>
</dbReference>
<dbReference type="SUPFAM" id="SSF53697">
    <property type="entry name" value="SIS domain"/>
    <property type="match status" value="1"/>
</dbReference>
<dbReference type="PROSITE" id="PS01272">
    <property type="entry name" value="GCKR"/>
    <property type="match status" value="1"/>
</dbReference>
<dbReference type="PROSITE" id="PS51464">
    <property type="entry name" value="SIS"/>
    <property type="match status" value="1"/>
</dbReference>
<protein>
    <recommendedName>
        <fullName evidence="1">N-acetylmuramic acid 6-phosphate etherase</fullName>
        <shortName evidence="1">MurNAc-6-P etherase</shortName>
        <ecNumber evidence="1">4.2.1.126</ecNumber>
    </recommendedName>
    <alternativeName>
        <fullName evidence="1">N-acetylmuramic acid 6-phosphate hydrolase</fullName>
    </alternativeName>
    <alternativeName>
        <fullName evidence="1">N-acetylmuramic acid 6-phosphate lyase</fullName>
    </alternativeName>
</protein>
<accession>A7GD48</accession>
<evidence type="ECO:0000255" key="1">
    <source>
        <dbReference type="HAMAP-Rule" id="MF_00068"/>
    </source>
</evidence>
<sequence length="302" mass="32656">MTNISLDKLVTESRNENTKDIDRVETLEMLKMINDEDKKVAEAVEKELIHIAKAVDKIGESFLNGGRLIYVGAGTSGRLGVLDASECPPTYGVSYDLVRGIIAGGESAMFKAREGAEDSKKLCIKDLKNINFGKNDILVGIAASGRTPYVIGGLEYANGIGATTISVTCNPESEMSKIANISIAPVVGPEAITGSTRMKAGTAQKMVLNMLSTGAMVKTGKVYGNLMVDLKATNEKLVERAKRIVMQATGSKREQVEKILKETNFDVKLSIFMIESSLDKIKAKEILDKNKGYIVEAIKEIS</sequence>
<organism>
    <name type="scientific">Clostridium botulinum (strain Langeland / NCTC 10281 / Type F)</name>
    <dbReference type="NCBI Taxonomy" id="441772"/>
    <lineage>
        <taxon>Bacteria</taxon>
        <taxon>Bacillati</taxon>
        <taxon>Bacillota</taxon>
        <taxon>Clostridia</taxon>
        <taxon>Eubacteriales</taxon>
        <taxon>Clostridiaceae</taxon>
        <taxon>Clostridium</taxon>
    </lineage>
</organism>
<proteinExistence type="inferred from homology"/>
<reference key="1">
    <citation type="submission" date="2007-06" db="EMBL/GenBank/DDBJ databases">
        <authorList>
            <person name="Brinkac L.M."/>
            <person name="Daugherty S."/>
            <person name="Dodson R.J."/>
            <person name="Madupu R."/>
            <person name="Brown J.L."/>
            <person name="Bruce D."/>
            <person name="Detter C."/>
            <person name="Munk C."/>
            <person name="Smith L.A."/>
            <person name="Smith T.J."/>
            <person name="White O."/>
            <person name="Brettin T.S."/>
        </authorList>
    </citation>
    <scope>NUCLEOTIDE SEQUENCE [LARGE SCALE GENOMIC DNA]</scope>
    <source>
        <strain>Langeland / NCTC 10281 / Type F</strain>
    </source>
</reference>
<comment type="function">
    <text evidence="1">Specifically catalyzes the cleavage of the D-lactyl ether substituent of MurNAc 6-phosphate, producing GlcNAc 6-phosphate and D-lactate.</text>
</comment>
<comment type="catalytic activity">
    <reaction evidence="1">
        <text>N-acetyl-D-muramate 6-phosphate + H2O = N-acetyl-D-glucosamine 6-phosphate + (R)-lactate</text>
        <dbReference type="Rhea" id="RHEA:26410"/>
        <dbReference type="ChEBI" id="CHEBI:15377"/>
        <dbReference type="ChEBI" id="CHEBI:16004"/>
        <dbReference type="ChEBI" id="CHEBI:57513"/>
        <dbReference type="ChEBI" id="CHEBI:58722"/>
        <dbReference type="EC" id="4.2.1.126"/>
    </reaction>
</comment>
<comment type="pathway">
    <text evidence="1">Amino-sugar metabolism; N-acetylmuramate degradation.</text>
</comment>
<comment type="subunit">
    <text evidence="1">Homodimer.</text>
</comment>
<comment type="miscellaneous">
    <text evidence="1">A lyase-type mechanism (elimination/hydration) is suggested for the cleavage of the lactyl ether bond of MurNAc 6-phosphate, with the formation of an alpha,beta-unsaturated aldehyde intermediate with (E)-stereochemistry, followed by the syn addition of water to give product.</text>
</comment>
<comment type="similarity">
    <text evidence="1">Belongs to the GCKR-like family. MurNAc-6-P etherase subfamily.</text>
</comment>